<sequence length="148" mass="16728">MGRLVFVSFGLLVVFLSLTGTGAGFCCPLGWSSYEGHCYKVFKQDMTWEDAEKFCTQQHEGSHLVSLQSSEEVDFVISMTAPMLKLGLVWIGLSNIWNECTLEWTNGNKVDYKAWSAEPECIVSKSTDKHWFSRPCSKTHKVVCKFQA</sequence>
<protein>
    <recommendedName>
        <fullName>Snaclec crotocetin</fullName>
        <shortName>CRC</shortName>
    </recommendedName>
</protein>
<proteinExistence type="evidence at transcript level"/>
<reference key="1">
    <citation type="submission" date="2002-08" db="EMBL/GenBank/DDBJ databases">
        <authorList>
            <person name="Radis-Baptista G."/>
            <person name="Camargo A.C.M."/>
            <person name="Yamane T."/>
        </authorList>
    </citation>
    <scope>NUCLEOTIDE SEQUENCE [MRNA]</scope>
    <source>
        <tissue>Venom gland</tissue>
    </source>
</reference>
<dbReference type="EMBL" id="AF541884">
    <property type="protein sequence ID" value="AAQ11365.1"/>
    <property type="molecule type" value="mRNA"/>
</dbReference>
<dbReference type="SMR" id="Q719L8"/>
<dbReference type="GO" id="GO:0005576">
    <property type="term" value="C:extracellular region"/>
    <property type="evidence" value="ECO:0007669"/>
    <property type="project" value="UniProtKB-SubCell"/>
</dbReference>
<dbReference type="GO" id="GO:0090729">
    <property type="term" value="F:toxin activity"/>
    <property type="evidence" value="ECO:0007669"/>
    <property type="project" value="UniProtKB-KW"/>
</dbReference>
<dbReference type="FunFam" id="3.10.100.10:FF:000087">
    <property type="entry name" value="Snaclec rhodocetin subunit delta"/>
    <property type="match status" value="1"/>
</dbReference>
<dbReference type="Gene3D" id="3.10.100.10">
    <property type="entry name" value="Mannose-Binding Protein A, subunit A"/>
    <property type="match status" value="1"/>
</dbReference>
<dbReference type="InterPro" id="IPR001304">
    <property type="entry name" value="C-type_lectin-like"/>
</dbReference>
<dbReference type="InterPro" id="IPR016186">
    <property type="entry name" value="C-type_lectin-like/link_sf"/>
</dbReference>
<dbReference type="InterPro" id="IPR050111">
    <property type="entry name" value="C-type_lectin/snaclec_domain"/>
</dbReference>
<dbReference type="InterPro" id="IPR018378">
    <property type="entry name" value="C-type_lectin_CS"/>
</dbReference>
<dbReference type="InterPro" id="IPR016187">
    <property type="entry name" value="CTDL_fold"/>
</dbReference>
<dbReference type="PANTHER" id="PTHR22803">
    <property type="entry name" value="MANNOSE, PHOSPHOLIPASE, LECTIN RECEPTOR RELATED"/>
    <property type="match status" value="1"/>
</dbReference>
<dbReference type="Pfam" id="PF00059">
    <property type="entry name" value="Lectin_C"/>
    <property type="match status" value="1"/>
</dbReference>
<dbReference type="PRINTS" id="PR01504">
    <property type="entry name" value="PNCREATITSAP"/>
</dbReference>
<dbReference type="SMART" id="SM00034">
    <property type="entry name" value="CLECT"/>
    <property type="match status" value="1"/>
</dbReference>
<dbReference type="SUPFAM" id="SSF56436">
    <property type="entry name" value="C-type lectin-like"/>
    <property type="match status" value="1"/>
</dbReference>
<dbReference type="PROSITE" id="PS00615">
    <property type="entry name" value="C_TYPE_LECTIN_1"/>
    <property type="match status" value="1"/>
</dbReference>
<dbReference type="PROSITE" id="PS50041">
    <property type="entry name" value="C_TYPE_LECTIN_2"/>
    <property type="match status" value="1"/>
</dbReference>
<organism>
    <name type="scientific">Crotalus durissus terrificus</name>
    <name type="common">South American rattlesnake</name>
    <dbReference type="NCBI Taxonomy" id="8732"/>
    <lineage>
        <taxon>Eukaryota</taxon>
        <taxon>Metazoa</taxon>
        <taxon>Chordata</taxon>
        <taxon>Craniata</taxon>
        <taxon>Vertebrata</taxon>
        <taxon>Euteleostomi</taxon>
        <taxon>Lepidosauria</taxon>
        <taxon>Squamata</taxon>
        <taxon>Bifurcata</taxon>
        <taxon>Unidentata</taxon>
        <taxon>Episquamata</taxon>
        <taxon>Toxicofera</taxon>
        <taxon>Serpentes</taxon>
        <taxon>Colubroidea</taxon>
        <taxon>Viperidae</taxon>
        <taxon>Crotalinae</taxon>
        <taxon>Crotalus</taxon>
    </lineage>
</organism>
<accession>Q719L8</accession>
<feature type="signal peptide" evidence="1">
    <location>
        <begin position="1"/>
        <end position="23"/>
    </location>
</feature>
<feature type="chain" id="PRO_0000355262" description="Snaclec crotocetin">
    <location>
        <begin position="24"/>
        <end position="148"/>
    </location>
</feature>
<feature type="domain" description="C-type lectin" evidence="2">
    <location>
        <begin position="34"/>
        <end position="145"/>
    </location>
</feature>
<feature type="disulfide bond" evidence="2">
    <location>
        <begin position="27"/>
        <end position="38"/>
    </location>
</feature>
<feature type="disulfide bond" evidence="2">
    <location>
        <begin position="55"/>
        <end position="144"/>
    </location>
</feature>
<feature type="disulfide bond" description="Interchain" evidence="2">
    <location>
        <position position="100"/>
    </location>
</feature>
<feature type="disulfide bond" evidence="2">
    <location>
        <begin position="121"/>
        <end position="136"/>
    </location>
</feature>
<evidence type="ECO:0000250" key="1"/>
<evidence type="ECO:0000255" key="2">
    <source>
        <dbReference type="PROSITE-ProRule" id="PRU00040"/>
    </source>
</evidence>
<evidence type="ECO:0000305" key="3"/>
<name>SL_CRODU</name>
<comment type="function">
    <text evidence="1">Interferes with one step of hemostasis (modulation of platelet aggregation, or coagulation cascade, for example).</text>
</comment>
<comment type="subunit">
    <text evidence="1">Heterodimer; disulfide-linked.</text>
</comment>
<comment type="subcellular location">
    <subcellularLocation>
        <location evidence="1">Secreted</location>
    </subcellularLocation>
</comment>
<comment type="tissue specificity">
    <text>Expressed by the venom gland.</text>
</comment>
<comment type="miscellaneous">
    <text>Shows greater sequence similarity to the beta than alpha subunits compared to other heterodimer snaclecs.</text>
</comment>
<comment type="similarity">
    <text evidence="3">Belongs to the snaclec family.</text>
</comment>
<keyword id="KW-1015">Disulfide bond</keyword>
<keyword id="KW-1199">Hemostasis impairing toxin</keyword>
<keyword id="KW-0964">Secreted</keyword>
<keyword id="KW-0732">Signal</keyword>
<keyword id="KW-0800">Toxin</keyword>